<evidence type="ECO:0000255" key="1">
    <source>
        <dbReference type="HAMAP-Rule" id="MF_01638"/>
    </source>
</evidence>
<organism>
    <name type="scientific">Escherichia coli O81 (strain ED1a)</name>
    <dbReference type="NCBI Taxonomy" id="585397"/>
    <lineage>
        <taxon>Bacteria</taxon>
        <taxon>Pseudomonadati</taxon>
        <taxon>Pseudomonadota</taxon>
        <taxon>Gammaproteobacteria</taxon>
        <taxon>Enterobacterales</taxon>
        <taxon>Enterobacteriaceae</taxon>
        <taxon>Escherichia</taxon>
    </lineage>
</organism>
<comment type="function">
    <text evidence="1">B6-vitamer kinase involved in the salvage pathway of pyridoxal 5'-phosphate (PLP). Catalyzes the phosphorylation of pyridoxine (PN), pyridoxal (PL), and pyridoxamine (PM), forming their respective 5'-phosphorylated esters, i.e. PNP, PLP and PMP.</text>
</comment>
<comment type="catalytic activity">
    <reaction evidence="1">
        <text>pyridoxal + ATP = pyridoxal 5'-phosphate + ADP + H(+)</text>
        <dbReference type="Rhea" id="RHEA:10224"/>
        <dbReference type="ChEBI" id="CHEBI:15378"/>
        <dbReference type="ChEBI" id="CHEBI:17310"/>
        <dbReference type="ChEBI" id="CHEBI:30616"/>
        <dbReference type="ChEBI" id="CHEBI:456216"/>
        <dbReference type="ChEBI" id="CHEBI:597326"/>
        <dbReference type="EC" id="2.7.1.35"/>
    </reaction>
</comment>
<comment type="catalytic activity">
    <reaction evidence="1">
        <text>pyridoxine + ATP = pyridoxine 5'-phosphate + ADP + H(+)</text>
        <dbReference type="Rhea" id="RHEA:25108"/>
        <dbReference type="ChEBI" id="CHEBI:15378"/>
        <dbReference type="ChEBI" id="CHEBI:16709"/>
        <dbReference type="ChEBI" id="CHEBI:30616"/>
        <dbReference type="ChEBI" id="CHEBI:58589"/>
        <dbReference type="ChEBI" id="CHEBI:456216"/>
        <dbReference type="EC" id="2.7.1.35"/>
    </reaction>
</comment>
<comment type="catalytic activity">
    <reaction evidence="1">
        <text>pyridoxamine + ATP = pyridoxamine 5'-phosphate + ADP + H(+)</text>
        <dbReference type="Rhea" id="RHEA:25104"/>
        <dbReference type="ChEBI" id="CHEBI:15378"/>
        <dbReference type="ChEBI" id="CHEBI:30616"/>
        <dbReference type="ChEBI" id="CHEBI:57761"/>
        <dbReference type="ChEBI" id="CHEBI:58451"/>
        <dbReference type="ChEBI" id="CHEBI:456216"/>
        <dbReference type="EC" id="2.7.1.35"/>
    </reaction>
</comment>
<comment type="cofactor">
    <cofactor evidence="1">
        <name>Mg(2+)</name>
        <dbReference type="ChEBI" id="CHEBI:18420"/>
    </cofactor>
</comment>
<comment type="pathway">
    <text evidence="1">Cofactor metabolism; pyridoxal 5'-phosphate salvage; pyridoxal 5'-phosphate from pyridoxal: step 1/1.</text>
</comment>
<comment type="pathway">
    <text evidence="1">Cofactor metabolism; pyridoxal 5'-phosphate salvage; pyridoxine 5'-phosphate from pyridoxine: step 1/1.</text>
</comment>
<comment type="pathway">
    <text evidence="1">Cofactor metabolism; pyridoxal 5'-phosphate salvage; pyridoxamine 5'-phosphate from pyridoxamine: step 1/1.</text>
</comment>
<comment type="subunit">
    <text evidence="1">Homodimer.</text>
</comment>
<comment type="similarity">
    <text evidence="1">Belongs to the pyridoxine kinase family. PdxK subfamily.</text>
</comment>
<accession>B7MY71</accession>
<dbReference type="EC" id="2.7.1.35" evidence="1"/>
<dbReference type="EMBL" id="CU928162">
    <property type="protein sequence ID" value="CAR09037.2"/>
    <property type="molecule type" value="Genomic_DNA"/>
</dbReference>
<dbReference type="RefSeq" id="WP_000096640.1">
    <property type="nucleotide sequence ID" value="NC_011745.1"/>
</dbReference>
<dbReference type="SMR" id="B7MY71"/>
<dbReference type="KEGG" id="ecq:ECED1_2862"/>
<dbReference type="HOGENOM" id="CLU_046496_3_1_6"/>
<dbReference type="UniPathway" id="UPA01068">
    <property type="reaction ID" value="UER00298"/>
</dbReference>
<dbReference type="UniPathway" id="UPA01068">
    <property type="reaction ID" value="UER00299"/>
</dbReference>
<dbReference type="UniPathway" id="UPA01068">
    <property type="reaction ID" value="UER00300"/>
</dbReference>
<dbReference type="Proteomes" id="UP000000748">
    <property type="component" value="Chromosome"/>
</dbReference>
<dbReference type="GO" id="GO:0005829">
    <property type="term" value="C:cytosol"/>
    <property type="evidence" value="ECO:0007669"/>
    <property type="project" value="TreeGrafter"/>
</dbReference>
<dbReference type="GO" id="GO:0005524">
    <property type="term" value="F:ATP binding"/>
    <property type="evidence" value="ECO:0007669"/>
    <property type="project" value="UniProtKB-UniRule"/>
</dbReference>
<dbReference type="GO" id="GO:0008902">
    <property type="term" value="F:hydroxymethylpyrimidine kinase activity"/>
    <property type="evidence" value="ECO:0007669"/>
    <property type="project" value="TreeGrafter"/>
</dbReference>
<dbReference type="GO" id="GO:0000287">
    <property type="term" value="F:magnesium ion binding"/>
    <property type="evidence" value="ECO:0007669"/>
    <property type="project" value="UniProtKB-UniRule"/>
</dbReference>
<dbReference type="GO" id="GO:0008478">
    <property type="term" value="F:pyridoxal kinase activity"/>
    <property type="evidence" value="ECO:0007669"/>
    <property type="project" value="UniProtKB-UniRule"/>
</dbReference>
<dbReference type="GO" id="GO:0008270">
    <property type="term" value="F:zinc ion binding"/>
    <property type="evidence" value="ECO:0007669"/>
    <property type="project" value="UniProtKB-UniRule"/>
</dbReference>
<dbReference type="GO" id="GO:0009443">
    <property type="term" value="P:pyridoxal 5'-phosphate salvage"/>
    <property type="evidence" value="ECO:0007669"/>
    <property type="project" value="UniProtKB-UniRule"/>
</dbReference>
<dbReference type="CDD" id="cd01173">
    <property type="entry name" value="pyridoxal_pyridoxamine_kinase"/>
    <property type="match status" value="1"/>
</dbReference>
<dbReference type="FunFam" id="3.40.1190.20:FF:000009">
    <property type="entry name" value="Pyridoxine/pyridoxal/pyridoxamine kinase"/>
    <property type="match status" value="1"/>
</dbReference>
<dbReference type="Gene3D" id="3.40.1190.20">
    <property type="match status" value="1"/>
</dbReference>
<dbReference type="HAMAP" id="MF_01638">
    <property type="entry name" value="PdxK"/>
    <property type="match status" value="1"/>
</dbReference>
<dbReference type="InterPro" id="IPR023479">
    <property type="entry name" value="PdxK"/>
</dbReference>
<dbReference type="InterPro" id="IPR013749">
    <property type="entry name" value="PM/HMP-P_kinase-1"/>
</dbReference>
<dbReference type="InterPro" id="IPR004625">
    <property type="entry name" value="PyrdxlKinase"/>
</dbReference>
<dbReference type="InterPro" id="IPR029056">
    <property type="entry name" value="Ribokinase-like"/>
</dbReference>
<dbReference type="NCBIfam" id="NF006034">
    <property type="entry name" value="PRK08176.1"/>
    <property type="match status" value="1"/>
</dbReference>
<dbReference type="NCBIfam" id="TIGR00687">
    <property type="entry name" value="pyridox_kin"/>
    <property type="match status" value="1"/>
</dbReference>
<dbReference type="PANTHER" id="PTHR10534">
    <property type="entry name" value="PYRIDOXAL KINASE"/>
    <property type="match status" value="1"/>
</dbReference>
<dbReference type="PANTHER" id="PTHR10534:SF15">
    <property type="entry name" value="PYRIDOXINE_PYRIDOXAL_PYRIDOXAMINE KINASE"/>
    <property type="match status" value="1"/>
</dbReference>
<dbReference type="Pfam" id="PF08543">
    <property type="entry name" value="Phos_pyr_kin"/>
    <property type="match status" value="1"/>
</dbReference>
<dbReference type="SUPFAM" id="SSF53613">
    <property type="entry name" value="Ribokinase-like"/>
    <property type="match status" value="1"/>
</dbReference>
<sequence>MSSLLLFNDKSRALQADIVAVQSQVVYGSVGNSIAVPAIKQNGLNVFAVPTVLLSNTPHYDTFYGGAIPDEWFSGYLRALQERDALRQLRAVTTGYMGTASQIKILAEWLTALRKDHPDLLIMVDPVIGDIDSGIYVKPDLPEAYRQYLLPLAQGITPNIFELEILTGKDCRDLDSAIAAAKSLLSDTLKWVVITSASGNEENQEMQVVVVSADSVNVISHSRVKTDLKGTGDLFCAQLISGLLKGKALTDAVHRAGLRVLEVMRYTQQHESDELILPPLAEA</sequence>
<proteinExistence type="inferred from homology"/>
<reference key="1">
    <citation type="journal article" date="2009" name="PLoS Genet.">
        <title>Organised genome dynamics in the Escherichia coli species results in highly diverse adaptive paths.</title>
        <authorList>
            <person name="Touchon M."/>
            <person name="Hoede C."/>
            <person name="Tenaillon O."/>
            <person name="Barbe V."/>
            <person name="Baeriswyl S."/>
            <person name="Bidet P."/>
            <person name="Bingen E."/>
            <person name="Bonacorsi S."/>
            <person name="Bouchier C."/>
            <person name="Bouvet O."/>
            <person name="Calteau A."/>
            <person name="Chiapello H."/>
            <person name="Clermont O."/>
            <person name="Cruveiller S."/>
            <person name="Danchin A."/>
            <person name="Diard M."/>
            <person name="Dossat C."/>
            <person name="Karoui M.E."/>
            <person name="Frapy E."/>
            <person name="Garry L."/>
            <person name="Ghigo J.M."/>
            <person name="Gilles A.M."/>
            <person name="Johnson J."/>
            <person name="Le Bouguenec C."/>
            <person name="Lescat M."/>
            <person name="Mangenot S."/>
            <person name="Martinez-Jehanne V."/>
            <person name="Matic I."/>
            <person name="Nassif X."/>
            <person name="Oztas S."/>
            <person name="Petit M.A."/>
            <person name="Pichon C."/>
            <person name="Rouy Z."/>
            <person name="Ruf C.S."/>
            <person name="Schneider D."/>
            <person name="Tourret J."/>
            <person name="Vacherie B."/>
            <person name="Vallenet D."/>
            <person name="Medigue C."/>
            <person name="Rocha E.P.C."/>
            <person name="Denamur E."/>
        </authorList>
    </citation>
    <scope>NUCLEOTIDE SEQUENCE [LARGE SCALE GENOMIC DNA]</scope>
    <source>
        <strain>ED1a</strain>
    </source>
</reference>
<keyword id="KW-0067">ATP-binding</keyword>
<keyword id="KW-0418">Kinase</keyword>
<keyword id="KW-0460">Magnesium</keyword>
<keyword id="KW-0479">Metal-binding</keyword>
<keyword id="KW-0547">Nucleotide-binding</keyword>
<keyword id="KW-0808">Transferase</keyword>
<keyword id="KW-0862">Zinc</keyword>
<feature type="chain" id="PRO_1000186803" description="Pyridoxine/pyridoxal/pyridoxamine kinase">
    <location>
        <begin position="1"/>
        <end position="283"/>
    </location>
</feature>
<feature type="binding site" evidence="1">
    <location>
        <position position="23"/>
    </location>
    <ligand>
        <name>substrate</name>
    </ligand>
</feature>
<feature type="binding site" evidence="1">
    <location>
        <position position="59"/>
    </location>
    <ligand>
        <name>substrate</name>
    </ligand>
</feature>
<feature type="binding site" evidence="1">
    <location>
        <position position="125"/>
    </location>
    <ligand>
        <name>ATP</name>
        <dbReference type="ChEBI" id="CHEBI:30616"/>
    </ligand>
</feature>
<feature type="binding site" evidence="1">
    <location>
        <position position="136"/>
    </location>
    <ligand>
        <name>Mg(2+)</name>
        <dbReference type="ChEBI" id="CHEBI:18420"/>
    </ligand>
</feature>
<feature type="binding site" evidence="1">
    <location>
        <position position="157"/>
    </location>
    <ligand>
        <name>ATP</name>
        <dbReference type="ChEBI" id="CHEBI:30616"/>
    </ligand>
</feature>
<feature type="binding site" evidence="1">
    <location>
        <position position="162"/>
    </location>
    <ligand>
        <name>ATP</name>
        <dbReference type="ChEBI" id="CHEBI:30616"/>
    </ligand>
</feature>
<feature type="binding site" evidence="1">
    <location>
        <position position="162"/>
    </location>
    <ligand>
        <name>Mg(2+)</name>
        <dbReference type="ChEBI" id="CHEBI:18420"/>
    </ligand>
</feature>
<feature type="binding site" evidence="1">
    <location>
        <position position="195"/>
    </location>
    <ligand>
        <name>ATP</name>
        <dbReference type="ChEBI" id="CHEBI:30616"/>
    </ligand>
</feature>
<feature type="binding site" evidence="1">
    <location>
        <begin position="221"/>
        <end position="224"/>
    </location>
    <ligand>
        <name>ATP</name>
        <dbReference type="ChEBI" id="CHEBI:30616"/>
    </ligand>
</feature>
<feature type="binding site" evidence="1">
    <location>
        <position position="231"/>
    </location>
    <ligand>
        <name>ATP</name>
        <dbReference type="ChEBI" id="CHEBI:30616"/>
    </ligand>
</feature>
<feature type="binding site" evidence="1">
    <location>
        <position position="233"/>
    </location>
    <ligand>
        <name>substrate</name>
    </ligand>
</feature>
<protein>
    <recommendedName>
        <fullName evidence="1">Pyridoxine/pyridoxal/pyridoxamine kinase</fullName>
        <shortName evidence="1">PN/PL/PM kinase</shortName>
        <ecNumber evidence="1">2.7.1.35</ecNumber>
    </recommendedName>
    <alternativeName>
        <fullName evidence="1">B6-vitamer kinase</fullName>
    </alternativeName>
</protein>
<name>PDXK_ECO81</name>
<gene>
    <name evidence="1" type="primary">pdxK</name>
    <name type="ordered locus">ECED1_2862</name>
</gene>